<keyword id="KW-0450">Lipoyl</keyword>
<keyword id="KW-1185">Reference proteome</keyword>
<sequence length="127" mass="13355">MSNIPAELRFAESHEWARLEADGSVTVGISDHAQEALGDVVFVELAEVGKVFGAGDAAGVVESVKAASDIYAPVGGEVIAVNEELADSPELLNEEPYGSWIFKLKPSNPAELDKLLDAAGYQALIGE</sequence>
<evidence type="ECO:0000255" key="1">
    <source>
        <dbReference type="HAMAP-Rule" id="MF_00272"/>
    </source>
</evidence>
<evidence type="ECO:0000255" key="2">
    <source>
        <dbReference type="PROSITE-ProRule" id="PRU01066"/>
    </source>
</evidence>
<dbReference type="EMBL" id="AE015451">
    <property type="protein sequence ID" value="AAN70758.1"/>
    <property type="molecule type" value="Genomic_DNA"/>
</dbReference>
<dbReference type="RefSeq" id="NP_747294.1">
    <property type="nucleotide sequence ID" value="NC_002947.4"/>
</dbReference>
<dbReference type="SMR" id="Q88CI8"/>
<dbReference type="STRING" id="160488.PP_5193"/>
<dbReference type="PaxDb" id="160488-PP_5193"/>
<dbReference type="KEGG" id="ppu:PP_5193"/>
<dbReference type="PATRIC" id="fig|160488.4.peg.5541"/>
<dbReference type="eggNOG" id="COG0509">
    <property type="taxonomic scope" value="Bacteria"/>
</dbReference>
<dbReference type="HOGENOM" id="CLU_097408_2_1_6"/>
<dbReference type="OrthoDB" id="9796712at2"/>
<dbReference type="PhylomeDB" id="Q88CI8"/>
<dbReference type="BioCyc" id="PPUT160488:G1G01-5539-MONOMER"/>
<dbReference type="Proteomes" id="UP000000556">
    <property type="component" value="Chromosome"/>
</dbReference>
<dbReference type="GO" id="GO:0005829">
    <property type="term" value="C:cytosol"/>
    <property type="evidence" value="ECO:0007669"/>
    <property type="project" value="TreeGrafter"/>
</dbReference>
<dbReference type="GO" id="GO:0005960">
    <property type="term" value="C:glycine cleavage complex"/>
    <property type="evidence" value="ECO:0007669"/>
    <property type="project" value="InterPro"/>
</dbReference>
<dbReference type="GO" id="GO:0019464">
    <property type="term" value="P:glycine decarboxylation via glycine cleavage system"/>
    <property type="evidence" value="ECO:0007669"/>
    <property type="project" value="UniProtKB-UniRule"/>
</dbReference>
<dbReference type="CDD" id="cd06848">
    <property type="entry name" value="GCS_H"/>
    <property type="match status" value="1"/>
</dbReference>
<dbReference type="Gene3D" id="2.40.50.100">
    <property type="match status" value="1"/>
</dbReference>
<dbReference type="HAMAP" id="MF_00272">
    <property type="entry name" value="GcvH"/>
    <property type="match status" value="1"/>
</dbReference>
<dbReference type="InterPro" id="IPR003016">
    <property type="entry name" value="2-oxoA_DH_lipoyl-BS"/>
</dbReference>
<dbReference type="InterPro" id="IPR000089">
    <property type="entry name" value="Biotin_lipoyl"/>
</dbReference>
<dbReference type="InterPro" id="IPR002930">
    <property type="entry name" value="GCV_H"/>
</dbReference>
<dbReference type="InterPro" id="IPR033753">
    <property type="entry name" value="GCV_H/Fam206"/>
</dbReference>
<dbReference type="InterPro" id="IPR017453">
    <property type="entry name" value="GCV_H_sub"/>
</dbReference>
<dbReference type="InterPro" id="IPR011053">
    <property type="entry name" value="Single_hybrid_motif"/>
</dbReference>
<dbReference type="NCBIfam" id="TIGR00527">
    <property type="entry name" value="gcvH"/>
    <property type="match status" value="1"/>
</dbReference>
<dbReference type="NCBIfam" id="NF002270">
    <property type="entry name" value="PRK01202.1"/>
    <property type="match status" value="1"/>
</dbReference>
<dbReference type="PANTHER" id="PTHR11715">
    <property type="entry name" value="GLYCINE CLEAVAGE SYSTEM H PROTEIN"/>
    <property type="match status" value="1"/>
</dbReference>
<dbReference type="PANTHER" id="PTHR11715:SF3">
    <property type="entry name" value="GLYCINE CLEAVAGE SYSTEM H PROTEIN-RELATED"/>
    <property type="match status" value="1"/>
</dbReference>
<dbReference type="Pfam" id="PF01597">
    <property type="entry name" value="GCV_H"/>
    <property type="match status" value="1"/>
</dbReference>
<dbReference type="SUPFAM" id="SSF51230">
    <property type="entry name" value="Single hybrid motif"/>
    <property type="match status" value="1"/>
</dbReference>
<dbReference type="PROSITE" id="PS50968">
    <property type="entry name" value="BIOTINYL_LIPOYL"/>
    <property type="match status" value="1"/>
</dbReference>
<dbReference type="PROSITE" id="PS00189">
    <property type="entry name" value="LIPOYL"/>
    <property type="match status" value="1"/>
</dbReference>
<protein>
    <recommendedName>
        <fullName evidence="1">Glycine cleavage system H protein 2</fullName>
    </recommendedName>
</protein>
<reference key="1">
    <citation type="journal article" date="2002" name="Environ. Microbiol.">
        <title>Complete genome sequence and comparative analysis of the metabolically versatile Pseudomonas putida KT2440.</title>
        <authorList>
            <person name="Nelson K.E."/>
            <person name="Weinel C."/>
            <person name="Paulsen I.T."/>
            <person name="Dodson R.J."/>
            <person name="Hilbert H."/>
            <person name="Martins dos Santos V.A.P."/>
            <person name="Fouts D.E."/>
            <person name="Gill S.R."/>
            <person name="Pop M."/>
            <person name="Holmes M."/>
            <person name="Brinkac L.M."/>
            <person name="Beanan M.J."/>
            <person name="DeBoy R.T."/>
            <person name="Daugherty S.C."/>
            <person name="Kolonay J.F."/>
            <person name="Madupu R."/>
            <person name="Nelson W.C."/>
            <person name="White O."/>
            <person name="Peterson J.D."/>
            <person name="Khouri H.M."/>
            <person name="Hance I."/>
            <person name="Chris Lee P."/>
            <person name="Holtzapple E.K."/>
            <person name="Scanlan D."/>
            <person name="Tran K."/>
            <person name="Moazzez A."/>
            <person name="Utterback T.R."/>
            <person name="Rizzo M."/>
            <person name="Lee K."/>
            <person name="Kosack D."/>
            <person name="Moestl D."/>
            <person name="Wedler H."/>
            <person name="Lauber J."/>
            <person name="Stjepandic D."/>
            <person name="Hoheisel J."/>
            <person name="Straetz M."/>
            <person name="Heim S."/>
            <person name="Kiewitz C."/>
            <person name="Eisen J.A."/>
            <person name="Timmis K.N."/>
            <person name="Duesterhoeft A."/>
            <person name="Tuemmler B."/>
            <person name="Fraser C.M."/>
        </authorList>
    </citation>
    <scope>NUCLEOTIDE SEQUENCE [LARGE SCALE GENOMIC DNA]</scope>
    <source>
        <strain>ATCC 47054 / DSM 6125 / CFBP 8728 / NCIMB 11950 / KT2440</strain>
    </source>
</reference>
<gene>
    <name evidence="1" type="primary">gcvH2</name>
    <name type="synonym">gcvH-2</name>
    <name type="ordered locus">PP_5193</name>
</gene>
<proteinExistence type="inferred from homology"/>
<name>GCSH2_PSEPK</name>
<accession>Q88CI8</accession>
<comment type="function">
    <text evidence="1">The glycine cleavage system catalyzes the degradation of glycine. The H protein shuttles the methylamine group of glycine from the P protein to the T protein.</text>
</comment>
<comment type="cofactor">
    <cofactor evidence="1">
        <name>(R)-lipoate</name>
        <dbReference type="ChEBI" id="CHEBI:83088"/>
    </cofactor>
    <text evidence="1">Binds 1 lipoyl cofactor covalently.</text>
</comment>
<comment type="subunit">
    <text evidence="1">The glycine cleavage system is composed of four proteins: P, T, L and H.</text>
</comment>
<comment type="similarity">
    <text evidence="1">Belongs to the GcvH family.</text>
</comment>
<organism>
    <name type="scientific">Pseudomonas putida (strain ATCC 47054 / DSM 6125 / CFBP 8728 / NCIMB 11950 / KT2440)</name>
    <dbReference type="NCBI Taxonomy" id="160488"/>
    <lineage>
        <taxon>Bacteria</taxon>
        <taxon>Pseudomonadati</taxon>
        <taxon>Pseudomonadota</taxon>
        <taxon>Gammaproteobacteria</taxon>
        <taxon>Pseudomonadales</taxon>
        <taxon>Pseudomonadaceae</taxon>
        <taxon>Pseudomonas</taxon>
    </lineage>
</organism>
<feature type="chain" id="PRO_0000166236" description="Glycine cleavage system H protein 2">
    <location>
        <begin position="1"/>
        <end position="127"/>
    </location>
</feature>
<feature type="domain" description="Lipoyl-binding" evidence="2">
    <location>
        <begin position="24"/>
        <end position="105"/>
    </location>
</feature>
<feature type="modified residue" description="N6-lipoyllysine" evidence="1">
    <location>
        <position position="65"/>
    </location>
</feature>